<organismHost>
    <name type="scientific">Sus scrofa</name>
    <name type="common">Pig</name>
    <dbReference type="NCBI Taxonomy" id="9823"/>
</organismHost>
<accession>P32220</accession>
<protein>
    <recommendedName>
        <fullName>Uncharacterized protein C15</fullName>
    </recommendedName>
</protein>
<organism>
    <name type="scientific">Swinepox virus (strain Kasza)</name>
    <name type="common">SWPV</name>
    <dbReference type="NCBI Taxonomy" id="10277"/>
    <lineage>
        <taxon>Viruses</taxon>
        <taxon>Varidnaviria</taxon>
        <taxon>Bamfordvirae</taxon>
        <taxon>Nucleocytoviricota</taxon>
        <taxon>Pokkesviricetes</taxon>
        <taxon>Chitovirales</taxon>
        <taxon>Poxviridae</taxon>
        <taxon>Chordopoxvirinae</taxon>
        <taxon>Suipoxvirus</taxon>
        <taxon>Swinepox virus</taxon>
    </lineage>
</organism>
<dbReference type="EMBL" id="L22013">
    <property type="protein sequence ID" value="AAC37856.1"/>
    <property type="molecule type" value="Genomic_DNA"/>
</dbReference>
<dbReference type="KEGG" id="vg:932401"/>
<dbReference type="InterPro" id="IPR022586">
    <property type="entry name" value="Swinepox_virus_C51"/>
</dbReference>
<dbReference type="Pfam" id="PF10857">
    <property type="entry name" value="DUF2701"/>
    <property type="match status" value="1"/>
</dbReference>
<gene>
    <name type="ORF">C15L</name>
</gene>
<reference key="1">
    <citation type="journal article" date="1993" name="Virology">
        <title>DNA sequence analysis of conserved and unique regions of swinepox virus: identification of genetic elements supporting phenotypic observations including a novel G protein-coupled receptor homologue.</title>
        <authorList>
            <person name="Massung R.F."/>
            <person name="Jayarama V."/>
            <person name="Moyer R.W."/>
        </authorList>
    </citation>
    <scope>NUCLEOTIDE SEQUENCE [GENOMIC DNA]</scope>
</reference>
<feature type="chain" id="PRO_0000099755" description="Uncharacterized protein C15">
    <location>
        <begin position="1"/>
        <end position="86"/>
    </location>
</feature>
<sequence>MNTTTSQIIIDNDMSNEVGTIMVITLCLVTIVITCYLLLQLVRWSFIVDIFRQIRTRCLQWTSRREFLQLDNMYYTNDSSVGVNTE</sequence>
<proteinExistence type="predicted"/>
<name>VC15_SWPVK</name>